<feature type="chain" id="PRO_1000200875" description="23S rRNA (uracil(747)-C(5))-methyltransferase RlmC">
    <location>
        <begin position="1"/>
        <end position="376"/>
    </location>
</feature>
<feature type="active site" description="Nucleophile" evidence="1">
    <location>
        <position position="334"/>
    </location>
</feature>
<feature type="binding site" evidence="1">
    <location>
        <position position="3"/>
    </location>
    <ligand>
        <name>[4Fe-4S] cluster</name>
        <dbReference type="ChEBI" id="CHEBI:49883"/>
    </ligand>
</feature>
<feature type="binding site" evidence="1">
    <location>
        <position position="11"/>
    </location>
    <ligand>
        <name>[4Fe-4S] cluster</name>
        <dbReference type="ChEBI" id="CHEBI:49883"/>
    </ligand>
</feature>
<feature type="binding site" evidence="1">
    <location>
        <position position="14"/>
    </location>
    <ligand>
        <name>[4Fe-4S] cluster</name>
        <dbReference type="ChEBI" id="CHEBI:49883"/>
    </ligand>
</feature>
<feature type="binding site" evidence="1">
    <location>
        <position position="87"/>
    </location>
    <ligand>
        <name>[4Fe-4S] cluster</name>
        <dbReference type="ChEBI" id="CHEBI:49883"/>
    </ligand>
</feature>
<feature type="binding site" evidence="1">
    <location>
        <position position="212"/>
    </location>
    <ligand>
        <name>S-adenosyl-L-methionine</name>
        <dbReference type="ChEBI" id="CHEBI:59789"/>
    </ligand>
</feature>
<feature type="binding site" evidence="1">
    <location>
        <position position="241"/>
    </location>
    <ligand>
        <name>S-adenosyl-L-methionine</name>
        <dbReference type="ChEBI" id="CHEBI:59789"/>
    </ligand>
</feature>
<feature type="binding site" evidence="1">
    <location>
        <position position="262"/>
    </location>
    <ligand>
        <name>S-adenosyl-L-methionine</name>
        <dbReference type="ChEBI" id="CHEBI:59789"/>
    </ligand>
</feature>
<feature type="binding site" evidence="1">
    <location>
        <position position="307"/>
    </location>
    <ligand>
        <name>S-adenosyl-L-methionine</name>
        <dbReference type="ChEBI" id="CHEBI:59789"/>
    </ligand>
</feature>
<accession>B4T0E3</accession>
<gene>
    <name evidence="1" type="primary">rlmC</name>
    <name type="synonym">rumB</name>
    <name type="ordered locus">SNSL254_A0955</name>
</gene>
<proteinExistence type="inferred from homology"/>
<organism>
    <name type="scientific">Salmonella newport (strain SL254)</name>
    <dbReference type="NCBI Taxonomy" id="423368"/>
    <lineage>
        <taxon>Bacteria</taxon>
        <taxon>Pseudomonadati</taxon>
        <taxon>Pseudomonadota</taxon>
        <taxon>Gammaproteobacteria</taxon>
        <taxon>Enterobacterales</taxon>
        <taxon>Enterobacteriaceae</taxon>
        <taxon>Salmonella</taxon>
    </lineage>
</organism>
<dbReference type="EC" id="2.1.1.189" evidence="1"/>
<dbReference type="EMBL" id="CP001113">
    <property type="protein sequence ID" value="ACF62537.1"/>
    <property type="molecule type" value="Genomic_DNA"/>
</dbReference>
<dbReference type="RefSeq" id="WP_001149788.1">
    <property type="nucleotide sequence ID" value="NZ_CCMR01000003.1"/>
</dbReference>
<dbReference type="SMR" id="B4T0E3"/>
<dbReference type="KEGG" id="see:SNSL254_A0955"/>
<dbReference type="HOGENOM" id="CLU_014689_0_0_6"/>
<dbReference type="Proteomes" id="UP000008824">
    <property type="component" value="Chromosome"/>
</dbReference>
<dbReference type="GO" id="GO:0051539">
    <property type="term" value="F:4 iron, 4 sulfur cluster binding"/>
    <property type="evidence" value="ECO:0007669"/>
    <property type="project" value="UniProtKB-KW"/>
</dbReference>
<dbReference type="GO" id="GO:0005506">
    <property type="term" value="F:iron ion binding"/>
    <property type="evidence" value="ECO:0007669"/>
    <property type="project" value="UniProtKB-UniRule"/>
</dbReference>
<dbReference type="GO" id="GO:0070041">
    <property type="term" value="F:rRNA (uridine-C5-)-methyltransferase activity"/>
    <property type="evidence" value="ECO:0007669"/>
    <property type="project" value="UniProtKB-UniRule"/>
</dbReference>
<dbReference type="GO" id="GO:0070475">
    <property type="term" value="P:rRNA base methylation"/>
    <property type="evidence" value="ECO:0007669"/>
    <property type="project" value="TreeGrafter"/>
</dbReference>
<dbReference type="CDD" id="cd02440">
    <property type="entry name" value="AdoMet_MTases"/>
    <property type="match status" value="1"/>
</dbReference>
<dbReference type="FunFam" id="2.40.50.1070:FF:000002">
    <property type="entry name" value="23S rRNA (uracil(747)-C(5))-methyltransferase RlmC"/>
    <property type="match status" value="1"/>
</dbReference>
<dbReference type="FunFam" id="3.40.50.150:FF:000049">
    <property type="entry name" value="23S rRNA (uracil(747)-C(5))-methyltransferase RlmC"/>
    <property type="match status" value="1"/>
</dbReference>
<dbReference type="Gene3D" id="2.40.50.1070">
    <property type="match status" value="1"/>
</dbReference>
<dbReference type="Gene3D" id="3.40.50.150">
    <property type="entry name" value="Vaccinia Virus protein VP39"/>
    <property type="match status" value="1"/>
</dbReference>
<dbReference type="HAMAP" id="MF_01012">
    <property type="entry name" value="23SrRNA_methyltr_RlmC"/>
    <property type="match status" value="1"/>
</dbReference>
<dbReference type="InterPro" id="IPR011825">
    <property type="entry name" value="23SrRNA_MeTrfase_RlmC"/>
</dbReference>
<dbReference type="InterPro" id="IPR030390">
    <property type="entry name" value="MeTrfase_TrmA_AS"/>
</dbReference>
<dbReference type="InterPro" id="IPR030391">
    <property type="entry name" value="MeTrfase_TrmA_CS"/>
</dbReference>
<dbReference type="InterPro" id="IPR029063">
    <property type="entry name" value="SAM-dependent_MTases_sf"/>
</dbReference>
<dbReference type="InterPro" id="IPR010280">
    <property type="entry name" value="U5_MeTrfase_fam"/>
</dbReference>
<dbReference type="NCBIfam" id="TIGR02085">
    <property type="entry name" value="meth_trns_rumB"/>
    <property type="match status" value="1"/>
</dbReference>
<dbReference type="PANTHER" id="PTHR11061">
    <property type="entry name" value="RNA M5U METHYLTRANSFERASE"/>
    <property type="match status" value="1"/>
</dbReference>
<dbReference type="PANTHER" id="PTHR11061:SF30">
    <property type="entry name" value="TRNA (URACIL(54)-C(5))-METHYLTRANSFERASE"/>
    <property type="match status" value="1"/>
</dbReference>
<dbReference type="Pfam" id="PF05958">
    <property type="entry name" value="tRNA_U5-meth_tr"/>
    <property type="match status" value="1"/>
</dbReference>
<dbReference type="SUPFAM" id="SSF53335">
    <property type="entry name" value="S-adenosyl-L-methionine-dependent methyltransferases"/>
    <property type="match status" value="1"/>
</dbReference>
<dbReference type="PROSITE" id="PS51687">
    <property type="entry name" value="SAM_MT_RNA_M5U"/>
    <property type="match status" value="1"/>
</dbReference>
<dbReference type="PROSITE" id="PS01230">
    <property type="entry name" value="TRMA_1"/>
    <property type="match status" value="1"/>
</dbReference>
<dbReference type="PROSITE" id="PS01231">
    <property type="entry name" value="TRMA_2"/>
    <property type="match status" value="1"/>
</dbReference>
<protein>
    <recommendedName>
        <fullName evidence="1">23S rRNA (uracil(747)-C(5))-methyltransferase RlmC</fullName>
        <ecNumber evidence="1">2.1.1.189</ecNumber>
    </recommendedName>
    <alternativeName>
        <fullName evidence="1">23S rRNA(m5U747)-methyltransferase</fullName>
    </alternativeName>
</protein>
<keyword id="KW-0004">4Fe-4S</keyword>
<keyword id="KW-0408">Iron</keyword>
<keyword id="KW-0411">Iron-sulfur</keyword>
<keyword id="KW-0479">Metal-binding</keyword>
<keyword id="KW-0489">Methyltransferase</keyword>
<keyword id="KW-0698">rRNA processing</keyword>
<keyword id="KW-0949">S-adenosyl-L-methionine</keyword>
<keyword id="KW-0808">Transferase</keyword>
<name>RLMC_SALNS</name>
<comment type="function">
    <text evidence="1">Catalyzes the formation of 5-methyl-uridine at position 747 (m5U747) in 23S rRNA.</text>
</comment>
<comment type="catalytic activity">
    <reaction evidence="1">
        <text>uridine(747) in 23S rRNA + S-adenosyl-L-methionine = 5-methyluridine(747) in 23S rRNA + S-adenosyl-L-homocysteine + H(+)</text>
        <dbReference type="Rhea" id="RHEA:42628"/>
        <dbReference type="Rhea" id="RHEA-COMP:10154"/>
        <dbReference type="Rhea" id="RHEA-COMP:10155"/>
        <dbReference type="ChEBI" id="CHEBI:15378"/>
        <dbReference type="ChEBI" id="CHEBI:57856"/>
        <dbReference type="ChEBI" id="CHEBI:59789"/>
        <dbReference type="ChEBI" id="CHEBI:65315"/>
        <dbReference type="ChEBI" id="CHEBI:74447"/>
        <dbReference type="EC" id="2.1.1.189"/>
    </reaction>
</comment>
<comment type="similarity">
    <text evidence="1">Belongs to the class I-like SAM-binding methyltransferase superfamily. RNA M5U methyltransferase family. RlmC subfamily.</text>
</comment>
<sequence length="376" mass="42252">MQCALYDAGRCRSCQWITQSVNEQLSAKTADLHRLLAGLPVEQWCAPISGPEQHFRNKAKMVVSGSVEKPLFGMLHRDGTPVDLCACPLYPASFAPVFSTLKPFIARAGLTPYNVARKRGELKYLLLTESQFDGGMMLRFVLRSETKLTQLRAALPWLRAQLPQLRVITANIQPVHMAIMEGETEIYLTDQQALAERFNDVPLWIRPQSFFQTNPTVASRLYATARDWVGQLPVRHMWDLFCGVGGFGLHCATPQMQLTGIEIAPEAIACAKQSAAELGLTRLHFQALDSTQFAIAQGETPDLVLVNPPRRGIGKPLCDYLAQMAPRFIIYSSCNAQTMAQDIRHLPNYRIQRVQLFDMFPHTAHYEVLTLLRRSI</sequence>
<evidence type="ECO:0000255" key="1">
    <source>
        <dbReference type="HAMAP-Rule" id="MF_01012"/>
    </source>
</evidence>
<reference key="1">
    <citation type="journal article" date="2011" name="J. Bacteriol.">
        <title>Comparative genomics of 28 Salmonella enterica isolates: evidence for CRISPR-mediated adaptive sublineage evolution.</title>
        <authorList>
            <person name="Fricke W.F."/>
            <person name="Mammel M.K."/>
            <person name="McDermott P.F."/>
            <person name="Tartera C."/>
            <person name="White D.G."/>
            <person name="Leclerc J.E."/>
            <person name="Ravel J."/>
            <person name="Cebula T.A."/>
        </authorList>
    </citation>
    <scope>NUCLEOTIDE SEQUENCE [LARGE SCALE GENOMIC DNA]</scope>
    <source>
        <strain>SL254</strain>
    </source>
</reference>